<sequence length="209" mass="22695">MTQASAKFIVVEGLEGAGKSSAIALIRDFIEKHTGLAPVCTREPGGTPLAERIRDLVKIADPSDPLCDESECLLIYAARAQLVANVIKPALAEGKWVLGDRHNLSSLAYQGGGRGLMPLVEAVSNATLKGFKPDLTLYLDLDPKLGLQRAAKRGELDRIEQQAIDFFERARATYLKLASEDEQIVVIDASQTMAEVHKDILAVLQAMAW</sequence>
<dbReference type="EC" id="2.7.4.9" evidence="1"/>
<dbReference type="EMBL" id="CP000444">
    <property type="protein sequence ID" value="ABI42729.1"/>
    <property type="molecule type" value="Genomic_DNA"/>
</dbReference>
<dbReference type="SMR" id="Q0HVX6"/>
<dbReference type="KEGG" id="shm:Shewmr7_1736"/>
<dbReference type="HOGENOM" id="CLU_049131_0_1_6"/>
<dbReference type="GO" id="GO:0005829">
    <property type="term" value="C:cytosol"/>
    <property type="evidence" value="ECO:0007669"/>
    <property type="project" value="TreeGrafter"/>
</dbReference>
<dbReference type="GO" id="GO:0005524">
    <property type="term" value="F:ATP binding"/>
    <property type="evidence" value="ECO:0007669"/>
    <property type="project" value="UniProtKB-UniRule"/>
</dbReference>
<dbReference type="GO" id="GO:0004798">
    <property type="term" value="F:dTMP kinase activity"/>
    <property type="evidence" value="ECO:0007669"/>
    <property type="project" value="UniProtKB-UniRule"/>
</dbReference>
<dbReference type="GO" id="GO:0006233">
    <property type="term" value="P:dTDP biosynthetic process"/>
    <property type="evidence" value="ECO:0007669"/>
    <property type="project" value="InterPro"/>
</dbReference>
<dbReference type="GO" id="GO:0006235">
    <property type="term" value="P:dTTP biosynthetic process"/>
    <property type="evidence" value="ECO:0007669"/>
    <property type="project" value="UniProtKB-UniRule"/>
</dbReference>
<dbReference type="GO" id="GO:0006227">
    <property type="term" value="P:dUDP biosynthetic process"/>
    <property type="evidence" value="ECO:0007669"/>
    <property type="project" value="TreeGrafter"/>
</dbReference>
<dbReference type="CDD" id="cd01672">
    <property type="entry name" value="TMPK"/>
    <property type="match status" value="1"/>
</dbReference>
<dbReference type="FunFam" id="3.40.50.300:FF:000321">
    <property type="entry name" value="Thymidylate kinase"/>
    <property type="match status" value="1"/>
</dbReference>
<dbReference type="Gene3D" id="3.40.50.300">
    <property type="entry name" value="P-loop containing nucleotide triphosphate hydrolases"/>
    <property type="match status" value="1"/>
</dbReference>
<dbReference type="HAMAP" id="MF_00165">
    <property type="entry name" value="Thymidylate_kinase"/>
    <property type="match status" value="1"/>
</dbReference>
<dbReference type="InterPro" id="IPR027417">
    <property type="entry name" value="P-loop_NTPase"/>
</dbReference>
<dbReference type="InterPro" id="IPR039430">
    <property type="entry name" value="Thymidylate_kin-like_dom"/>
</dbReference>
<dbReference type="InterPro" id="IPR018095">
    <property type="entry name" value="Thymidylate_kin_CS"/>
</dbReference>
<dbReference type="InterPro" id="IPR018094">
    <property type="entry name" value="Thymidylate_kinase"/>
</dbReference>
<dbReference type="NCBIfam" id="TIGR00041">
    <property type="entry name" value="DTMP_kinase"/>
    <property type="match status" value="1"/>
</dbReference>
<dbReference type="PANTHER" id="PTHR10344">
    <property type="entry name" value="THYMIDYLATE KINASE"/>
    <property type="match status" value="1"/>
</dbReference>
<dbReference type="PANTHER" id="PTHR10344:SF4">
    <property type="entry name" value="UMP-CMP KINASE 2, MITOCHONDRIAL"/>
    <property type="match status" value="1"/>
</dbReference>
<dbReference type="Pfam" id="PF02223">
    <property type="entry name" value="Thymidylate_kin"/>
    <property type="match status" value="1"/>
</dbReference>
<dbReference type="SUPFAM" id="SSF52540">
    <property type="entry name" value="P-loop containing nucleoside triphosphate hydrolases"/>
    <property type="match status" value="1"/>
</dbReference>
<dbReference type="PROSITE" id="PS01331">
    <property type="entry name" value="THYMIDYLATE_KINASE"/>
    <property type="match status" value="1"/>
</dbReference>
<evidence type="ECO:0000255" key="1">
    <source>
        <dbReference type="HAMAP-Rule" id="MF_00165"/>
    </source>
</evidence>
<reference key="1">
    <citation type="submission" date="2006-08" db="EMBL/GenBank/DDBJ databases">
        <title>Complete sequence of chromosome 1 of Shewanella sp. MR-7.</title>
        <authorList>
            <person name="Copeland A."/>
            <person name="Lucas S."/>
            <person name="Lapidus A."/>
            <person name="Barry K."/>
            <person name="Detter J.C."/>
            <person name="Glavina del Rio T."/>
            <person name="Hammon N."/>
            <person name="Israni S."/>
            <person name="Dalin E."/>
            <person name="Tice H."/>
            <person name="Pitluck S."/>
            <person name="Kiss H."/>
            <person name="Brettin T."/>
            <person name="Bruce D."/>
            <person name="Han C."/>
            <person name="Tapia R."/>
            <person name="Gilna P."/>
            <person name="Schmutz J."/>
            <person name="Larimer F."/>
            <person name="Land M."/>
            <person name="Hauser L."/>
            <person name="Kyrpides N."/>
            <person name="Mikhailova N."/>
            <person name="Nealson K."/>
            <person name="Konstantinidis K."/>
            <person name="Klappenbach J."/>
            <person name="Tiedje J."/>
            <person name="Richardson P."/>
        </authorList>
    </citation>
    <scope>NUCLEOTIDE SEQUENCE [LARGE SCALE GENOMIC DNA]</scope>
    <source>
        <strain>MR-7</strain>
    </source>
</reference>
<comment type="function">
    <text evidence="1">Phosphorylation of dTMP to form dTDP in both de novo and salvage pathways of dTTP synthesis.</text>
</comment>
<comment type="catalytic activity">
    <reaction evidence="1">
        <text>dTMP + ATP = dTDP + ADP</text>
        <dbReference type="Rhea" id="RHEA:13517"/>
        <dbReference type="ChEBI" id="CHEBI:30616"/>
        <dbReference type="ChEBI" id="CHEBI:58369"/>
        <dbReference type="ChEBI" id="CHEBI:63528"/>
        <dbReference type="ChEBI" id="CHEBI:456216"/>
        <dbReference type="EC" id="2.7.4.9"/>
    </reaction>
</comment>
<comment type="similarity">
    <text evidence="1">Belongs to the thymidylate kinase family.</text>
</comment>
<protein>
    <recommendedName>
        <fullName evidence="1">Thymidylate kinase</fullName>
        <ecNumber evidence="1">2.7.4.9</ecNumber>
    </recommendedName>
    <alternativeName>
        <fullName evidence="1">dTMP kinase</fullName>
    </alternativeName>
</protein>
<organism>
    <name type="scientific">Shewanella sp. (strain MR-7)</name>
    <dbReference type="NCBI Taxonomy" id="60481"/>
    <lineage>
        <taxon>Bacteria</taxon>
        <taxon>Pseudomonadati</taxon>
        <taxon>Pseudomonadota</taxon>
        <taxon>Gammaproteobacteria</taxon>
        <taxon>Alteromonadales</taxon>
        <taxon>Shewanellaceae</taxon>
        <taxon>Shewanella</taxon>
    </lineage>
</organism>
<gene>
    <name evidence="1" type="primary">tmk</name>
    <name type="ordered locus">Shewmr7_1736</name>
</gene>
<proteinExistence type="inferred from homology"/>
<accession>Q0HVX6</accession>
<name>KTHY_SHESR</name>
<keyword id="KW-0067">ATP-binding</keyword>
<keyword id="KW-0418">Kinase</keyword>
<keyword id="KW-0545">Nucleotide biosynthesis</keyword>
<keyword id="KW-0547">Nucleotide-binding</keyword>
<keyword id="KW-0808">Transferase</keyword>
<feature type="chain" id="PRO_1000023280" description="Thymidylate kinase">
    <location>
        <begin position="1"/>
        <end position="209"/>
    </location>
</feature>
<feature type="binding site" evidence="1">
    <location>
        <begin position="13"/>
        <end position="20"/>
    </location>
    <ligand>
        <name>ATP</name>
        <dbReference type="ChEBI" id="CHEBI:30616"/>
    </ligand>
</feature>